<proteinExistence type="inferred from homology"/>
<name>TIG_STRPC</name>
<organism>
    <name type="scientific">Streptococcus pyogenes serotype M12 (strain MGAS9429)</name>
    <dbReference type="NCBI Taxonomy" id="370551"/>
    <lineage>
        <taxon>Bacteria</taxon>
        <taxon>Bacillati</taxon>
        <taxon>Bacillota</taxon>
        <taxon>Bacilli</taxon>
        <taxon>Lactobacillales</taxon>
        <taxon>Streptococcaceae</taxon>
        <taxon>Streptococcus</taxon>
    </lineage>
</organism>
<protein>
    <recommendedName>
        <fullName evidence="1">Trigger factor</fullName>
        <shortName evidence="1">TF</shortName>
        <ecNumber evidence="1">5.2.1.8</ecNumber>
    </recommendedName>
    <alternativeName>
        <fullName evidence="1">PPIase</fullName>
    </alternativeName>
</protein>
<reference key="1">
    <citation type="journal article" date="2006" name="Proc. Natl. Acad. Sci. U.S.A.">
        <title>Molecular genetic anatomy of inter- and intraserotype variation in the human bacterial pathogen group A Streptococcus.</title>
        <authorList>
            <person name="Beres S.B."/>
            <person name="Richter E.W."/>
            <person name="Nagiec M.J."/>
            <person name="Sumby P."/>
            <person name="Porcella S.F."/>
            <person name="DeLeo F.R."/>
            <person name="Musser J.M."/>
        </authorList>
    </citation>
    <scope>NUCLEOTIDE SEQUENCE [LARGE SCALE GENOMIC DNA]</scope>
    <source>
        <strain>MGAS9429</strain>
    </source>
</reference>
<dbReference type="EC" id="5.2.1.8" evidence="1"/>
<dbReference type="EMBL" id="CP000259">
    <property type="protein sequence ID" value="ABF32802.1"/>
    <property type="molecule type" value="Genomic_DNA"/>
</dbReference>
<dbReference type="SMR" id="Q1JK21"/>
<dbReference type="KEGG" id="spk:MGAS9429_Spy1615"/>
<dbReference type="HOGENOM" id="CLU_033058_3_2_9"/>
<dbReference type="Proteomes" id="UP000002433">
    <property type="component" value="Chromosome"/>
</dbReference>
<dbReference type="GO" id="GO:0005737">
    <property type="term" value="C:cytoplasm"/>
    <property type="evidence" value="ECO:0007669"/>
    <property type="project" value="UniProtKB-SubCell"/>
</dbReference>
<dbReference type="GO" id="GO:0003755">
    <property type="term" value="F:peptidyl-prolyl cis-trans isomerase activity"/>
    <property type="evidence" value="ECO:0007669"/>
    <property type="project" value="UniProtKB-UniRule"/>
</dbReference>
<dbReference type="GO" id="GO:0044183">
    <property type="term" value="F:protein folding chaperone"/>
    <property type="evidence" value="ECO:0007669"/>
    <property type="project" value="TreeGrafter"/>
</dbReference>
<dbReference type="GO" id="GO:0043022">
    <property type="term" value="F:ribosome binding"/>
    <property type="evidence" value="ECO:0007669"/>
    <property type="project" value="TreeGrafter"/>
</dbReference>
<dbReference type="GO" id="GO:0051083">
    <property type="term" value="P:'de novo' cotranslational protein folding"/>
    <property type="evidence" value="ECO:0007669"/>
    <property type="project" value="TreeGrafter"/>
</dbReference>
<dbReference type="GO" id="GO:0051301">
    <property type="term" value="P:cell division"/>
    <property type="evidence" value="ECO:0007669"/>
    <property type="project" value="UniProtKB-KW"/>
</dbReference>
<dbReference type="GO" id="GO:0061077">
    <property type="term" value="P:chaperone-mediated protein folding"/>
    <property type="evidence" value="ECO:0007669"/>
    <property type="project" value="TreeGrafter"/>
</dbReference>
<dbReference type="GO" id="GO:0015031">
    <property type="term" value="P:protein transport"/>
    <property type="evidence" value="ECO:0007669"/>
    <property type="project" value="UniProtKB-UniRule"/>
</dbReference>
<dbReference type="GO" id="GO:0043335">
    <property type="term" value="P:protein unfolding"/>
    <property type="evidence" value="ECO:0007669"/>
    <property type="project" value="TreeGrafter"/>
</dbReference>
<dbReference type="FunFam" id="3.10.50.40:FF:000001">
    <property type="entry name" value="Trigger factor"/>
    <property type="match status" value="1"/>
</dbReference>
<dbReference type="Gene3D" id="3.10.50.40">
    <property type="match status" value="1"/>
</dbReference>
<dbReference type="Gene3D" id="3.30.70.1050">
    <property type="entry name" value="Trigger factor ribosome-binding domain"/>
    <property type="match status" value="1"/>
</dbReference>
<dbReference type="Gene3D" id="1.10.3120.10">
    <property type="entry name" value="Trigger factor, C-terminal domain"/>
    <property type="match status" value="1"/>
</dbReference>
<dbReference type="HAMAP" id="MF_00303">
    <property type="entry name" value="Trigger_factor_Tig"/>
    <property type="match status" value="1"/>
</dbReference>
<dbReference type="InterPro" id="IPR046357">
    <property type="entry name" value="PPIase_dom_sf"/>
</dbReference>
<dbReference type="InterPro" id="IPR001179">
    <property type="entry name" value="PPIase_FKBP_dom"/>
</dbReference>
<dbReference type="InterPro" id="IPR005215">
    <property type="entry name" value="Trig_fac"/>
</dbReference>
<dbReference type="InterPro" id="IPR008880">
    <property type="entry name" value="Trigger_fac_C"/>
</dbReference>
<dbReference type="InterPro" id="IPR037041">
    <property type="entry name" value="Trigger_fac_C_sf"/>
</dbReference>
<dbReference type="InterPro" id="IPR008881">
    <property type="entry name" value="Trigger_fac_ribosome-bd_bac"/>
</dbReference>
<dbReference type="InterPro" id="IPR036611">
    <property type="entry name" value="Trigger_fac_ribosome-bd_sf"/>
</dbReference>
<dbReference type="InterPro" id="IPR027304">
    <property type="entry name" value="Trigger_fact/SurA_dom_sf"/>
</dbReference>
<dbReference type="NCBIfam" id="TIGR00115">
    <property type="entry name" value="tig"/>
    <property type="match status" value="1"/>
</dbReference>
<dbReference type="PANTHER" id="PTHR30560">
    <property type="entry name" value="TRIGGER FACTOR CHAPERONE AND PEPTIDYL-PROLYL CIS/TRANS ISOMERASE"/>
    <property type="match status" value="1"/>
</dbReference>
<dbReference type="PANTHER" id="PTHR30560:SF3">
    <property type="entry name" value="TRIGGER FACTOR-LIKE PROTEIN TIG, CHLOROPLASTIC"/>
    <property type="match status" value="1"/>
</dbReference>
<dbReference type="Pfam" id="PF00254">
    <property type="entry name" value="FKBP_C"/>
    <property type="match status" value="1"/>
</dbReference>
<dbReference type="Pfam" id="PF05698">
    <property type="entry name" value="Trigger_C"/>
    <property type="match status" value="1"/>
</dbReference>
<dbReference type="Pfam" id="PF05697">
    <property type="entry name" value="Trigger_N"/>
    <property type="match status" value="1"/>
</dbReference>
<dbReference type="PIRSF" id="PIRSF003095">
    <property type="entry name" value="Trigger_factor"/>
    <property type="match status" value="1"/>
</dbReference>
<dbReference type="SUPFAM" id="SSF54534">
    <property type="entry name" value="FKBP-like"/>
    <property type="match status" value="1"/>
</dbReference>
<dbReference type="SUPFAM" id="SSF109998">
    <property type="entry name" value="Triger factor/SurA peptide-binding domain-like"/>
    <property type="match status" value="1"/>
</dbReference>
<dbReference type="SUPFAM" id="SSF102735">
    <property type="entry name" value="Trigger factor ribosome-binding domain"/>
    <property type="match status" value="1"/>
</dbReference>
<dbReference type="PROSITE" id="PS50059">
    <property type="entry name" value="FKBP_PPIASE"/>
    <property type="match status" value="1"/>
</dbReference>
<keyword id="KW-0131">Cell cycle</keyword>
<keyword id="KW-0132">Cell division</keyword>
<keyword id="KW-0143">Chaperone</keyword>
<keyword id="KW-0963">Cytoplasm</keyword>
<keyword id="KW-0413">Isomerase</keyword>
<keyword id="KW-0697">Rotamase</keyword>
<evidence type="ECO:0000255" key="1">
    <source>
        <dbReference type="HAMAP-Rule" id="MF_00303"/>
    </source>
</evidence>
<feature type="chain" id="PRO_0000256627" description="Trigger factor">
    <location>
        <begin position="1"/>
        <end position="456"/>
    </location>
</feature>
<feature type="domain" description="PPIase FKBP-type" evidence="1">
    <location>
        <begin position="192"/>
        <end position="277"/>
    </location>
</feature>
<comment type="function">
    <text evidence="1">Involved in protein export. Acts as a chaperone by maintaining the newly synthesized protein in an open conformation. Functions as a peptidyl-prolyl cis-trans isomerase.</text>
</comment>
<comment type="catalytic activity">
    <reaction evidence="1">
        <text>[protein]-peptidylproline (omega=180) = [protein]-peptidylproline (omega=0)</text>
        <dbReference type="Rhea" id="RHEA:16237"/>
        <dbReference type="Rhea" id="RHEA-COMP:10747"/>
        <dbReference type="Rhea" id="RHEA-COMP:10748"/>
        <dbReference type="ChEBI" id="CHEBI:83833"/>
        <dbReference type="ChEBI" id="CHEBI:83834"/>
        <dbReference type="EC" id="5.2.1.8"/>
    </reaction>
</comment>
<comment type="subcellular location">
    <subcellularLocation>
        <location>Cytoplasm</location>
    </subcellularLocation>
    <text evidence="1">About half TF is bound to the ribosome near the polypeptide exit tunnel while the other half is free in the cytoplasm.</text>
</comment>
<comment type="domain">
    <text evidence="1">Consists of 3 domains; the N-terminus binds the ribosome, the middle domain has PPIase activity, while the C-terminus has intrinsic chaperone activity on its own.</text>
</comment>
<comment type="similarity">
    <text evidence="1">Belongs to the FKBP-type PPIase family. Tig subfamily.</text>
</comment>
<sequence length="456" mass="50519">MISRIKSFKNALNYDKMNCIEIILRRNDLMSTSFENKATNRGVITFTISQDKIKPALDKAFNKIKKDLNAPGFRKGHMPRPVFNQKFGEEVLYEDALNIVLPEAYEAAVTELGLDVVAQPKIDVVSMEKGKEWTLSAEVVTKPEVKLGDYKNLVVEVDASKEVSDEDVDAKIERERQNLAELIIKDGEAAQGDTVVIDFVGSVDGVEFDGGKGDNFSLGLGSGQFIPGFEDQLVGAKAGDEVEVNVTFPESYQAEDLAGKAAKFMTTIHEVKTKEVPELDDELAKDIDEDVDTLEDLKVKYRKELEAAQETAYDDAVEGAAIELAVANAEIVDLPEEMIHEEVNRSVNEFMGNMQRQGISPEMYFQLTGTTQEDLHNQYSAEADKRVKTNLVIEAIAKAEGFEATDSEIEQEINDLATEYNMPADQVRSLLSADMLKHDIAMKKAVEVITSTASVK</sequence>
<gene>
    <name evidence="1" type="primary">tig</name>
    <name type="ordered locus">MGAS9429_Spy1615</name>
</gene>
<accession>Q1JK21</accession>